<comment type="function">
    <text evidence="1">One of the components of the core complex of photosystem II (PSII). PSII is a light-driven water:plastoquinone oxidoreductase that uses light energy to abstract electrons from H(2)O, generating O(2) and a proton gradient subsequently used for ATP formation. It consists of a core antenna complex that captures photons, and an electron transfer chain that converts photonic excitation into a charge separation.</text>
</comment>
<comment type="subunit">
    <text evidence="1">PSII is composed of 1 copy each of membrane proteins PsbA, PsbB, PsbC, PsbD, PsbE, PsbF, PsbH, PsbI, PsbJ, PsbK, PsbL, PsbM, PsbT, PsbX, PsbY, PsbZ, Psb30/Ycf12, at least 3 peripheral proteins of the oxygen-evolving complex and a large number of cofactors. It forms dimeric complexes.</text>
</comment>
<comment type="subcellular location">
    <subcellularLocation>
        <location evidence="1">Plastid</location>
        <location evidence="1">Chloroplast thylakoid membrane</location>
        <topology evidence="1">Single-pass membrane protein</topology>
    </subcellularLocation>
</comment>
<comment type="similarity">
    <text evidence="1">Belongs to the PsbJ family.</text>
</comment>
<feature type="chain" id="PRO_0000292261" description="Photosystem II reaction center protein J">
    <location>
        <begin position="1"/>
        <end position="39"/>
    </location>
</feature>
<feature type="transmembrane region" description="Helical" evidence="1">
    <location>
        <begin position="9"/>
        <end position="29"/>
    </location>
</feature>
<accession>Q4G383</accession>
<evidence type="ECO:0000255" key="1">
    <source>
        <dbReference type="HAMAP-Rule" id="MF_01305"/>
    </source>
</evidence>
<organism>
    <name type="scientific">Emiliania huxleyi</name>
    <name type="common">Coccolithophore</name>
    <name type="synonym">Pontosphaera huxleyi</name>
    <dbReference type="NCBI Taxonomy" id="2903"/>
    <lineage>
        <taxon>Eukaryota</taxon>
        <taxon>Haptista</taxon>
        <taxon>Haptophyta</taxon>
        <taxon>Prymnesiophyceae</taxon>
        <taxon>Isochrysidales</taxon>
        <taxon>Noelaerhabdaceae</taxon>
        <taxon>Emiliania</taxon>
    </lineage>
</organism>
<geneLocation type="chloroplast"/>
<name>PSBJ_EMIHU</name>
<proteinExistence type="inferred from homology"/>
<protein>
    <recommendedName>
        <fullName evidence="1">Photosystem II reaction center protein J</fullName>
        <shortName evidence="1">PSII-J</shortName>
    </recommendedName>
</protein>
<dbReference type="EMBL" id="AY741371">
    <property type="protein sequence ID" value="AAX13883.1"/>
    <property type="molecule type" value="Genomic_DNA"/>
</dbReference>
<dbReference type="RefSeq" id="YP_277384.1">
    <property type="nucleotide sequence ID" value="NC_007288.1"/>
</dbReference>
<dbReference type="SMR" id="Q4G383"/>
<dbReference type="GeneID" id="3562468"/>
<dbReference type="GO" id="GO:0009535">
    <property type="term" value="C:chloroplast thylakoid membrane"/>
    <property type="evidence" value="ECO:0007669"/>
    <property type="project" value="UniProtKB-SubCell"/>
</dbReference>
<dbReference type="GO" id="GO:0009539">
    <property type="term" value="C:photosystem II reaction center"/>
    <property type="evidence" value="ECO:0007669"/>
    <property type="project" value="InterPro"/>
</dbReference>
<dbReference type="GO" id="GO:0015979">
    <property type="term" value="P:photosynthesis"/>
    <property type="evidence" value="ECO:0007669"/>
    <property type="project" value="UniProtKB-UniRule"/>
</dbReference>
<dbReference type="Gene3D" id="6.10.250.2070">
    <property type="match status" value="1"/>
</dbReference>
<dbReference type="HAMAP" id="MF_01305">
    <property type="entry name" value="PSII_PsbJ"/>
    <property type="match status" value="1"/>
</dbReference>
<dbReference type="InterPro" id="IPR002682">
    <property type="entry name" value="PSII_PsbJ"/>
</dbReference>
<dbReference type="InterPro" id="IPR037267">
    <property type="entry name" value="PSII_PsbJ_sf"/>
</dbReference>
<dbReference type="PANTHER" id="PTHR34812">
    <property type="entry name" value="PHOTOSYSTEM II REACTION CENTER PROTEIN J"/>
    <property type="match status" value="1"/>
</dbReference>
<dbReference type="PANTHER" id="PTHR34812:SF3">
    <property type="entry name" value="PHOTOSYSTEM II REACTION CENTER PROTEIN J"/>
    <property type="match status" value="1"/>
</dbReference>
<dbReference type="Pfam" id="PF01788">
    <property type="entry name" value="PsbJ"/>
    <property type="match status" value="1"/>
</dbReference>
<dbReference type="SUPFAM" id="SSF161021">
    <property type="entry name" value="Photosystem II reaction center protein J, PsbJ"/>
    <property type="match status" value="1"/>
</dbReference>
<sequence>MSDVGRVPLWMVATVGGLAAGGLLILFVFGSYSGLGSSL</sequence>
<gene>
    <name evidence="1" type="primary">psbJ</name>
</gene>
<keyword id="KW-0150">Chloroplast</keyword>
<keyword id="KW-0472">Membrane</keyword>
<keyword id="KW-0602">Photosynthesis</keyword>
<keyword id="KW-0604">Photosystem II</keyword>
<keyword id="KW-0934">Plastid</keyword>
<keyword id="KW-0674">Reaction center</keyword>
<keyword id="KW-0793">Thylakoid</keyword>
<keyword id="KW-0812">Transmembrane</keyword>
<keyword id="KW-1133">Transmembrane helix</keyword>
<reference key="1">
    <citation type="journal article" date="2005" name="DNA Res.">
        <title>The complete plastid genome sequence of the haptophyte Emiliania huxleyi: a comparison to other plastid genomes.</title>
        <authorList>
            <person name="Sanchez-Puerta M.V."/>
            <person name="Bachvaroff T.R."/>
            <person name="Delwiche C.F."/>
        </authorList>
    </citation>
    <scope>NUCLEOTIDE SEQUENCE [LARGE SCALE GENOMIC DNA]</scope>
    <source>
        <strain>CCMP373 / CSIRO-CS-57 / BT6</strain>
    </source>
</reference>